<name>HEM3_EXIS2</name>
<feature type="chain" id="PRO_1000125671" description="Porphobilinogen deaminase">
    <location>
        <begin position="1"/>
        <end position="308"/>
    </location>
</feature>
<feature type="modified residue" description="S-(dipyrrolylmethanemethyl)cysteine" evidence="1">
    <location>
        <position position="241"/>
    </location>
</feature>
<organism>
    <name type="scientific">Exiguobacterium sibiricum (strain DSM 17290 / CCUG 55495 / CIP 109462 / JCM 13490 / 255-15)</name>
    <dbReference type="NCBI Taxonomy" id="262543"/>
    <lineage>
        <taxon>Bacteria</taxon>
        <taxon>Bacillati</taxon>
        <taxon>Bacillota</taxon>
        <taxon>Bacilli</taxon>
        <taxon>Bacillales</taxon>
        <taxon>Bacillales Family XII. Incertae Sedis</taxon>
        <taxon>Exiguobacterium</taxon>
    </lineage>
</organism>
<comment type="function">
    <text evidence="1">Tetrapolymerization of the monopyrrole PBG into the hydroxymethylbilane pre-uroporphyrinogen in several discrete steps.</text>
</comment>
<comment type="catalytic activity">
    <reaction evidence="1">
        <text>4 porphobilinogen + H2O = hydroxymethylbilane + 4 NH4(+)</text>
        <dbReference type="Rhea" id="RHEA:13185"/>
        <dbReference type="ChEBI" id="CHEBI:15377"/>
        <dbReference type="ChEBI" id="CHEBI:28938"/>
        <dbReference type="ChEBI" id="CHEBI:57845"/>
        <dbReference type="ChEBI" id="CHEBI:58126"/>
        <dbReference type="EC" id="2.5.1.61"/>
    </reaction>
</comment>
<comment type="cofactor">
    <cofactor evidence="1">
        <name>dipyrromethane</name>
        <dbReference type="ChEBI" id="CHEBI:60342"/>
    </cofactor>
    <text evidence="1">Binds 1 dipyrromethane group covalently.</text>
</comment>
<comment type="pathway">
    <text evidence="1">Porphyrin-containing compound metabolism; protoporphyrin-IX biosynthesis; coproporphyrinogen-III from 5-aminolevulinate: step 2/4.</text>
</comment>
<comment type="subunit">
    <text evidence="1">Monomer.</text>
</comment>
<comment type="miscellaneous">
    <text evidence="1">The porphobilinogen subunits are added to the dipyrromethane group.</text>
</comment>
<comment type="similarity">
    <text evidence="1">Belongs to the HMBS family.</text>
</comment>
<gene>
    <name evidence="1" type="primary">hemC</name>
    <name type="ordered locus">Exig_2137</name>
</gene>
<evidence type="ECO:0000255" key="1">
    <source>
        <dbReference type="HAMAP-Rule" id="MF_00260"/>
    </source>
</evidence>
<keyword id="KW-0627">Porphyrin biosynthesis</keyword>
<keyword id="KW-1185">Reference proteome</keyword>
<keyword id="KW-0808">Transferase</keyword>
<sequence>MRKIIVGSRSSKLAMTQTKWVIEQLKQAGAPYEFEIKNIITKGDRILDVTLSKVGGKGLFVKEIEQQMIDEDIDFAVHSMKDLPSELPTGLIIGATPSRVDARDALITTTGGGLDSLPEGAIVGTSSLRRGSQLLKLRPDLKIESIRGNIDTRLEKLKTGPFDGILLAAAGLQRMGWSEDIVSEYISTDDMIPAVGQGILAIECRANDQEVRDLLNLIHDQMTEKVAFAERSFLAAIEGSCHVPVGGFATINEDLSTTLVGFLGSVDGQQILLERETSLDPMQLGQTVATRLLDAGGREILASLPDDL</sequence>
<dbReference type="EC" id="2.5.1.61" evidence="1"/>
<dbReference type="EMBL" id="CP001022">
    <property type="protein sequence ID" value="ACB61589.1"/>
    <property type="molecule type" value="Genomic_DNA"/>
</dbReference>
<dbReference type="RefSeq" id="WP_012371006.1">
    <property type="nucleotide sequence ID" value="NC_010556.1"/>
</dbReference>
<dbReference type="SMR" id="B1YJV1"/>
<dbReference type="STRING" id="262543.Exig_2137"/>
<dbReference type="KEGG" id="esi:Exig_2137"/>
<dbReference type="eggNOG" id="COG0181">
    <property type="taxonomic scope" value="Bacteria"/>
</dbReference>
<dbReference type="HOGENOM" id="CLU_019704_0_2_9"/>
<dbReference type="OrthoDB" id="9810298at2"/>
<dbReference type="UniPathway" id="UPA00251">
    <property type="reaction ID" value="UER00319"/>
</dbReference>
<dbReference type="Proteomes" id="UP000001681">
    <property type="component" value="Chromosome"/>
</dbReference>
<dbReference type="GO" id="GO:0005737">
    <property type="term" value="C:cytoplasm"/>
    <property type="evidence" value="ECO:0007669"/>
    <property type="project" value="TreeGrafter"/>
</dbReference>
<dbReference type="GO" id="GO:0004418">
    <property type="term" value="F:hydroxymethylbilane synthase activity"/>
    <property type="evidence" value="ECO:0007669"/>
    <property type="project" value="UniProtKB-UniRule"/>
</dbReference>
<dbReference type="GO" id="GO:0006782">
    <property type="term" value="P:protoporphyrinogen IX biosynthetic process"/>
    <property type="evidence" value="ECO:0007669"/>
    <property type="project" value="UniProtKB-UniRule"/>
</dbReference>
<dbReference type="CDD" id="cd13646">
    <property type="entry name" value="PBP2_EcHMBS_like"/>
    <property type="match status" value="1"/>
</dbReference>
<dbReference type="FunFam" id="3.40.190.10:FF:000004">
    <property type="entry name" value="Porphobilinogen deaminase"/>
    <property type="match status" value="1"/>
</dbReference>
<dbReference type="FunFam" id="3.40.190.10:FF:000005">
    <property type="entry name" value="Porphobilinogen deaminase"/>
    <property type="match status" value="1"/>
</dbReference>
<dbReference type="Gene3D" id="3.40.190.10">
    <property type="entry name" value="Periplasmic binding protein-like II"/>
    <property type="match status" value="2"/>
</dbReference>
<dbReference type="Gene3D" id="3.30.160.40">
    <property type="entry name" value="Porphobilinogen deaminase, C-terminal domain"/>
    <property type="match status" value="1"/>
</dbReference>
<dbReference type="HAMAP" id="MF_00260">
    <property type="entry name" value="Porphobil_deam"/>
    <property type="match status" value="1"/>
</dbReference>
<dbReference type="InterPro" id="IPR000860">
    <property type="entry name" value="HemC"/>
</dbReference>
<dbReference type="InterPro" id="IPR022419">
    <property type="entry name" value="Porphobilin_deaminase_cofac_BS"/>
</dbReference>
<dbReference type="InterPro" id="IPR022417">
    <property type="entry name" value="Porphobilin_deaminase_N"/>
</dbReference>
<dbReference type="InterPro" id="IPR022418">
    <property type="entry name" value="Porphobilinogen_deaminase_C"/>
</dbReference>
<dbReference type="InterPro" id="IPR036803">
    <property type="entry name" value="Porphobilinogen_deaminase_C_sf"/>
</dbReference>
<dbReference type="NCBIfam" id="TIGR00212">
    <property type="entry name" value="hemC"/>
    <property type="match status" value="1"/>
</dbReference>
<dbReference type="PANTHER" id="PTHR11557">
    <property type="entry name" value="PORPHOBILINOGEN DEAMINASE"/>
    <property type="match status" value="1"/>
</dbReference>
<dbReference type="PANTHER" id="PTHR11557:SF0">
    <property type="entry name" value="PORPHOBILINOGEN DEAMINASE"/>
    <property type="match status" value="1"/>
</dbReference>
<dbReference type="Pfam" id="PF01379">
    <property type="entry name" value="Porphobil_deam"/>
    <property type="match status" value="1"/>
</dbReference>
<dbReference type="Pfam" id="PF03900">
    <property type="entry name" value="Porphobil_deamC"/>
    <property type="match status" value="1"/>
</dbReference>
<dbReference type="PIRSF" id="PIRSF001438">
    <property type="entry name" value="4pyrrol_synth_OHMeBilane_synth"/>
    <property type="match status" value="1"/>
</dbReference>
<dbReference type="PRINTS" id="PR00151">
    <property type="entry name" value="PORPHBDMNASE"/>
</dbReference>
<dbReference type="SUPFAM" id="SSF53850">
    <property type="entry name" value="Periplasmic binding protein-like II"/>
    <property type="match status" value="1"/>
</dbReference>
<dbReference type="SUPFAM" id="SSF54782">
    <property type="entry name" value="Porphobilinogen deaminase (hydroxymethylbilane synthase), C-terminal domain"/>
    <property type="match status" value="1"/>
</dbReference>
<dbReference type="PROSITE" id="PS00533">
    <property type="entry name" value="PORPHOBILINOGEN_DEAM"/>
    <property type="match status" value="1"/>
</dbReference>
<proteinExistence type="inferred from homology"/>
<accession>B1YJV1</accession>
<reference key="1">
    <citation type="submission" date="2008-04" db="EMBL/GenBank/DDBJ databases">
        <title>Complete sequence of chromosome of Exiguobacterium sibiricum 255-15.</title>
        <authorList>
            <consortium name="US DOE Joint Genome Institute"/>
            <person name="Copeland A."/>
            <person name="Lucas S."/>
            <person name="Lapidus A."/>
            <person name="Glavina del Rio T."/>
            <person name="Dalin E."/>
            <person name="Tice H."/>
            <person name="Bruce D."/>
            <person name="Goodwin L."/>
            <person name="Pitluck S."/>
            <person name="Kiss H."/>
            <person name="Chertkov O."/>
            <person name="Monk C."/>
            <person name="Brettin T."/>
            <person name="Detter J.C."/>
            <person name="Han C."/>
            <person name="Kuske C.R."/>
            <person name="Schmutz J."/>
            <person name="Larimer F."/>
            <person name="Land M."/>
            <person name="Hauser L."/>
            <person name="Kyrpides N."/>
            <person name="Mikhailova N."/>
            <person name="Vishnivetskaya T."/>
            <person name="Rodrigues D.F."/>
            <person name="Gilichinsky D."/>
            <person name="Tiedje J."/>
            <person name="Richardson P."/>
        </authorList>
    </citation>
    <scope>NUCLEOTIDE SEQUENCE [LARGE SCALE GENOMIC DNA]</scope>
    <source>
        <strain>DSM 17290 / CCUG 55495 / CIP 109462 / JCM 13490 / 255-15</strain>
    </source>
</reference>
<protein>
    <recommendedName>
        <fullName evidence="1">Porphobilinogen deaminase</fullName>
        <shortName evidence="1">PBG</shortName>
        <ecNumber evidence="1">2.5.1.61</ecNumber>
    </recommendedName>
    <alternativeName>
        <fullName evidence="1">Hydroxymethylbilane synthase</fullName>
        <shortName evidence="1">HMBS</shortName>
    </alternativeName>
    <alternativeName>
        <fullName evidence="1">Pre-uroporphyrinogen synthase</fullName>
    </alternativeName>
</protein>